<keyword id="KW-0217">Developmental protein</keyword>
<keyword id="KW-0221">Differentiation</keyword>
<keyword id="KW-0325">Glycoprotein</keyword>
<keyword id="KW-0339">Growth factor</keyword>
<keyword id="KW-0497">Mitogen</keyword>
<keyword id="KW-0524">Neurogenesis</keyword>
<keyword id="KW-1185">Reference proteome</keyword>
<keyword id="KW-0964">Secreted</keyword>
<keyword id="KW-0732">Signal</keyword>
<sequence length="212" mass="24975">MRLKSSRLGYLFLQFMTLCFYTQMTMQSISMPNFKHHVTEQSRLSDRMSRRLTRTYQLYSRTSGKHVQVLGNKRVNANAEDGDIHAKLVVETDTFGSRVRIRGAKTGYYICMNKKGKLIGRRKGRGKDCIFTEIVLENNYTALQNAKYKGWYMAFTRKGRPRKAMQTRQHQREAHFMKRLPRGHLLTEQKPFDLIPYPLNKRTKHHQRASVN</sequence>
<accession>Q805B2</accession>
<organism>
    <name type="scientific">Danio rerio</name>
    <name type="common">Zebrafish</name>
    <name type="synonym">Brachydanio rerio</name>
    <dbReference type="NCBI Taxonomy" id="7955"/>
    <lineage>
        <taxon>Eukaryota</taxon>
        <taxon>Metazoa</taxon>
        <taxon>Chordata</taxon>
        <taxon>Craniata</taxon>
        <taxon>Vertebrata</taxon>
        <taxon>Euteleostomi</taxon>
        <taxon>Actinopterygii</taxon>
        <taxon>Neopterygii</taxon>
        <taxon>Teleostei</taxon>
        <taxon>Ostariophysi</taxon>
        <taxon>Cypriniformes</taxon>
        <taxon>Danionidae</taxon>
        <taxon>Danioninae</taxon>
        <taxon>Danio</taxon>
    </lineage>
</organism>
<evidence type="ECO:0000250" key="1">
    <source>
        <dbReference type="UniProtKB" id="O60258"/>
    </source>
</evidence>
<evidence type="ECO:0000255" key="2"/>
<evidence type="ECO:0000269" key="3">
    <source>
    </source>
</evidence>
<evidence type="ECO:0000305" key="4"/>
<evidence type="ECO:0000312" key="5">
    <source>
        <dbReference type="EMBL" id="BAC55316.1"/>
    </source>
</evidence>
<proteinExistence type="evidence at transcript level"/>
<gene>
    <name type="primary">fgf8b</name>
    <name evidence="5" type="synonym">fgf17</name>
    <name type="synonym">fgf17a</name>
</gene>
<feature type="signal peptide" evidence="2">
    <location>
        <begin position="1"/>
        <end position="27"/>
    </location>
</feature>
<feature type="chain" id="PRO_0000008988" description="Fibroblast growth factor 8b">
    <location>
        <begin position="28"/>
        <end position="212"/>
    </location>
</feature>
<feature type="glycosylation site" description="N-linked (GlcNAc...) asparagine" evidence="2">
    <location>
        <position position="139"/>
    </location>
</feature>
<protein>
    <recommendedName>
        <fullName>Fibroblast growth factor 8b</fullName>
        <shortName>FGF-8b</shortName>
    </recommendedName>
    <alternativeName>
        <fullName>Fibroblast growth factor 17a</fullName>
        <shortName>FGF-17a</shortName>
    </alternativeName>
</protein>
<comment type="function">
    <text evidence="3">May act as signaling molecule during development of the midbrain-hindbrain boundary (MHB) organizer, and be involved in patterning of the nervous system.</text>
</comment>
<comment type="subcellular location">
    <subcellularLocation>
        <location evidence="1">Secreted</location>
    </subcellularLocation>
</comment>
<comment type="developmental stage">
    <text evidence="3">Not expressed during gastrulation. First detected at the 8-somite stage in the ventral region of the MHB and in the anterior somites. At the 14-somite stage, expressed in the anteromedial margins of the somites and in the optic stalks. At 24 hours, expression is lost in the somites but observed in the otic vesicle. At 30 hours, expressed in the hyoid and at 36 hours in the dorsal diencephalon.</text>
</comment>
<comment type="similarity">
    <text evidence="2">Belongs to the heparin-binding growth factors family.</text>
</comment>
<reference evidence="4 5" key="1">
    <citation type="journal article" date="2000" name="Mech. Dev.">
        <title>Overlapping and distinct functions provided by fgf17, a new zebrafish member of the Fgf8/17/18 subgroup of Fgfs.</title>
        <authorList>
            <person name="Reifers F."/>
            <person name="Adams J."/>
            <person name="Mason I.J."/>
            <person name="Schulte-Merker S."/>
            <person name="Brand M."/>
        </authorList>
    </citation>
    <scope>NUCLEOTIDE SEQUENCE [MRNA]</scope>
    <scope>FUNCTION</scope>
    <scope>DEVELOPMENTAL STAGE</scope>
    <source>
        <tissue evidence="3">Embryo</tissue>
    </source>
</reference>
<dbReference type="EMBL" id="AB100171">
    <property type="protein sequence ID" value="BAC55316.1"/>
    <property type="molecule type" value="mRNA"/>
</dbReference>
<dbReference type="RefSeq" id="NP_878276.1">
    <property type="nucleotide sequence ID" value="NM_182856.1"/>
</dbReference>
<dbReference type="SMR" id="Q805B2"/>
<dbReference type="FunCoup" id="Q805B2">
    <property type="interactions" value="392"/>
</dbReference>
<dbReference type="STRING" id="7955.ENSDARP00000057884"/>
<dbReference type="GlyCosmos" id="Q805B2">
    <property type="glycosylation" value="1 site, No reported glycans"/>
</dbReference>
<dbReference type="PaxDb" id="7955-ENSDARP00000057884"/>
<dbReference type="Ensembl" id="ENSDART00000057885">
    <property type="protein sequence ID" value="ENSDARP00000057884"/>
    <property type="gene ID" value="ENSDARG00000039615"/>
</dbReference>
<dbReference type="GeneID" id="65089"/>
<dbReference type="KEGG" id="dre:65089"/>
<dbReference type="AGR" id="ZFIN:ZDB-GENE-010122-1"/>
<dbReference type="CTD" id="65089"/>
<dbReference type="ZFIN" id="ZDB-GENE-010122-1">
    <property type="gene designation" value="fgf8b"/>
</dbReference>
<dbReference type="eggNOG" id="KOG3885">
    <property type="taxonomic scope" value="Eukaryota"/>
</dbReference>
<dbReference type="HOGENOM" id="CLU_090682_0_0_1"/>
<dbReference type="InParanoid" id="Q805B2"/>
<dbReference type="OMA" id="CFYAQDT"/>
<dbReference type="OrthoDB" id="5988014at2759"/>
<dbReference type="PhylomeDB" id="Q805B2"/>
<dbReference type="TreeFam" id="TF331233"/>
<dbReference type="PRO" id="PR:Q805B2"/>
<dbReference type="Proteomes" id="UP000000437">
    <property type="component" value="Chromosome 1"/>
</dbReference>
<dbReference type="Bgee" id="ENSDARG00000039615">
    <property type="expression patterns" value="Expressed in midbrain-hindbrain boundary and 17 other cell types or tissues"/>
</dbReference>
<dbReference type="ExpressionAtlas" id="Q805B2">
    <property type="expression patterns" value="baseline and differential"/>
</dbReference>
<dbReference type="GO" id="GO:0005737">
    <property type="term" value="C:cytoplasm"/>
    <property type="evidence" value="ECO:0000318"/>
    <property type="project" value="GO_Central"/>
</dbReference>
<dbReference type="GO" id="GO:0005615">
    <property type="term" value="C:extracellular space"/>
    <property type="evidence" value="ECO:0000318"/>
    <property type="project" value="GO_Central"/>
</dbReference>
<dbReference type="GO" id="GO:0005104">
    <property type="term" value="F:fibroblast growth factor receptor binding"/>
    <property type="evidence" value="ECO:0000303"/>
    <property type="project" value="UniProtKB"/>
</dbReference>
<dbReference type="GO" id="GO:0008083">
    <property type="term" value="F:growth factor activity"/>
    <property type="evidence" value="ECO:0000318"/>
    <property type="project" value="GO_Central"/>
</dbReference>
<dbReference type="GO" id="GO:0005105">
    <property type="term" value="F:type 1 fibroblast growth factor receptor binding"/>
    <property type="evidence" value="ECO:0000318"/>
    <property type="project" value="GO_Central"/>
</dbReference>
<dbReference type="GO" id="GO:0005111">
    <property type="term" value="F:type 2 fibroblast growth factor receptor binding"/>
    <property type="evidence" value="ECO:0000318"/>
    <property type="project" value="GO_Central"/>
</dbReference>
<dbReference type="GO" id="GO:0009953">
    <property type="term" value="P:dorsal/ventral pattern formation"/>
    <property type="evidence" value="ECO:0000318"/>
    <property type="project" value="GO_Central"/>
</dbReference>
<dbReference type="GO" id="GO:0008543">
    <property type="term" value="P:fibroblast growth factor receptor signaling pathway"/>
    <property type="evidence" value="ECO:0000318"/>
    <property type="project" value="GO_Central"/>
</dbReference>
<dbReference type="GO" id="GO:0030917">
    <property type="term" value="P:midbrain-hindbrain boundary development"/>
    <property type="evidence" value="ECO:0000303"/>
    <property type="project" value="UniProtKB"/>
</dbReference>
<dbReference type="GO" id="GO:0022008">
    <property type="term" value="P:neurogenesis"/>
    <property type="evidence" value="ECO:0000318"/>
    <property type="project" value="GO_Central"/>
</dbReference>
<dbReference type="GO" id="GO:0007389">
    <property type="term" value="P:pattern specification process"/>
    <property type="evidence" value="ECO:0000303"/>
    <property type="project" value="UniProtKB"/>
</dbReference>
<dbReference type="GO" id="GO:0051781">
    <property type="term" value="P:positive regulation of cell division"/>
    <property type="evidence" value="ECO:0007669"/>
    <property type="project" value="UniProtKB-KW"/>
</dbReference>
<dbReference type="GO" id="GO:0008284">
    <property type="term" value="P:positive regulation of cell population proliferation"/>
    <property type="evidence" value="ECO:0000318"/>
    <property type="project" value="GO_Central"/>
</dbReference>
<dbReference type="GO" id="GO:0043410">
    <property type="term" value="P:positive regulation of MAPK cascade"/>
    <property type="evidence" value="ECO:0000318"/>
    <property type="project" value="GO_Central"/>
</dbReference>
<dbReference type="GO" id="GO:0030334">
    <property type="term" value="P:regulation of cell migration"/>
    <property type="evidence" value="ECO:0000318"/>
    <property type="project" value="GO_Central"/>
</dbReference>
<dbReference type="CDD" id="cd23322">
    <property type="entry name" value="beta-trefoil_FGF8"/>
    <property type="match status" value="1"/>
</dbReference>
<dbReference type="FunFam" id="2.80.10.50:FF:000007">
    <property type="entry name" value="Fibroblast growth factor"/>
    <property type="match status" value="1"/>
</dbReference>
<dbReference type="Gene3D" id="2.80.10.50">
    <property type="match status" value="1"/>
</dbReference>
<dbReference type="InterPro" id="IPR002209">
    <property type="entry name" value="Fibroblast_GF_fam"/>
</dbReference>
<dbReference type="InterPro" id="IPR008996">
    <property type="entry name" value="IL1/FGF"/>
</dbReference>
<dbReference type="PANTHER" id="PTHR11486">
    <property type="entry name" value="FIBROBLAST GROWTH FACTOR"/>
    <property type="match status" value="1"/>
</dbReference>
<dbReference type="Pfam" id="PF00167">
    <property type="entry name" value="FGF"/>
    <property type="match status" value="1"/>
</dbReference>
<dbReference type="PRINTS" id="PR00262">
    <property type="entry name" value="IL1HBGF"/>
</dbReference>
<dbReference type="SMART" id="SM00442">
    <property type="entry name" value="FGF"/>
    <property type="match status" value="1"/>
</dbReference>
<dbReference type="SUPFAM" id="SSF50353">
    <property type="entry name" value="Cytokine"/>
    <property type="match status" value="1"/>
</dbReference>
<dbReference type="PROSITE" id="PS00247">
    <property type="entry name" value="HBGF_FGF"/>
    <property type="match status" value="1"/>
</dbReference>
<name>FGF8B_DANRE</name>